<gene>
    <name type="primary">OPG124</name>
    <name type="ORF">D12L</name>
</gene>
<evidence type="ECO:0000250" key="1">
    <source>
        <dbReference type="UniProtKB" id="P04318"/>
    </source>
</evidence>
<evidence type="ECO:0000305" key="2"/>
<keyword id="KW-0002">3D-structure</keyword>
<keyword id="KW-0506">mRNA capping</keyword>
<keyword id="KW-0507">mRNA processing</keyword>
<keyword id="KW-1185">Reference proteome</keyword>
<keyword id="KW-0804">Transcription</keyword>
<keyword id="KW-0805">Transcription regulation</keyword>
<keyword id="KW-0806">Transcription termination</keyword>
<keyword id="KW-0946">Virion</keyword>
<organism>
    <name type="scientific">Vaccinia virus (strain Copenhagen)</name>
    <name type="common">VACV</name>
    <dbReference type="NCBI Taxonomy" id="10249"/>
    <lineage>
        <taxon>Viruses</taxon>
        <taxon>Varidnaviria</taxon>
        <taxon>Bamfordvirae</taxon>
        <taxon>Nucleocytoviricota</taxon>
        <taxon>Pokkesviricetes</taxon>
        <taxon>Chitovirales</taxon>
        <taxon>Poxviridae</taxon>
        <taxon>Chordopoxvirinae</taxon>
        <taxon>Orthopoxvirus</taxon>
        <taxon>Vaccinia virus</taxon>
    </lineage>
</organism>
<accession>P20980</accession>
<dbReference type="EMBL" id="M35027">
    <property type="protein sequence ID" value="AAA48113.1"/>
    <property type="molecule type" value="Genomic_DNA"/>
</dbReference>
<dbReference type="PIR" id="B42516">
    <property type="entry name" value="B42516"/>
</dbReference>
<dbReference type="PDB" id="8P0J">
    <property type="method" value="EM"/>
    <property type="resolution" value="2.39 A"/>
    <property type="chains" value="L=1-287"/>
</dbReference>
<dbReference type="PDB" id="8P0N">
    <property type="method" value="EM"/>
    <property type="resolution" value="2.58 A"/>
    <property type="chains" value="L=1-287"/>
</dbReference>
<dbReference type="PDB" id="8RQK">
    <property type="method" value="EM"/>
    <property type="resolution" value="2.65 A"/>
    <property type="chains" value="L=1-287"/>
</dbReference>
<dbReference type="PDBsum" id="8P0J"/>
<dbReference type="PDBsum" id="8P0N"/>
<dbReference type="PDBsum" id="8RQK"/>
<dbReference type="EMDB" id="EMD-17334"/>
<dbReference type="EMDB" id="EMD-17336"/>
<dbReference type="EMDB" id="EMD-19442"/>
<dbReference type="SMR" id="P20980"/>
<dbReference type="Proteomes" id="UP000008269">
    <property type="component" value="Segment"/>
</dbReference>
<dbReference type="GO" id="GO:0044423">
    <property type="term" value="C:virion component"/>
    <property type="evidence" value="ECO:0007669"/>
    <property type="project" value="UniProtKB-KW"/>
</dbReference>
<dbReference type="GO" id="GO:0004482">
    <property type="term" value="F:mRNA 5'-cap (guanine-N7-)-methyltransferase activity"/>
    <property type="evidence" value="ECO:0007669"/>
    <property type="project" value="InterPro"/>
</dbReference>
<dbReference type="GO" id="GO:0006353">
    <property type="term" value="P:DNA-templated transcription termination"/>
    <property type="evidence" value="ECO:0007669"/>
    <property type="project" value="UniProtKB-KW"/>
</dbReference>
<dbReference type="Gene3D" id="3.40.50.11680">
    <property type="entry name" value="Poxvirus mRNA capping enzyme, small subunit"/>
    <property type="match status" value="1"/>
</dbReference>
<dbReference type="InterPro" id="IPR005009">
    <property type="entry name" value="Poxvirus_mRNA-cap_ssu"/>
</dbReference>
<dbReference type="InterPro" id="IPR043096">
    <property type="entry name" value="Poxvirus_mRNA-cap_ssu_sf"/>
</dbReference>
<dbReference type="Pfam" id="PF03341">
    <property type="entry name" value="Pox_mRNA-cap"/>
    <property type="match status" value="1"/>
</dbReference>
<reference key="1">
    <citation type="journal article" date="1990" name="Virology">
        <title>The complete DNA sequence of vaccinia virus.</title>
        <authorList>
            <person name="Goebel S.J."/>
            <person name="Johnson G.P."/>
            <person name="Perkus M.E."/>
            <person name="Davis S.W."/>
            <person name="Winslow J.P."/>
            <person name="Paoletti E."/>
        </authorList>
    </citation>
    <scope>NUCLEOTIDE SEQUENCE [LARGE SCALE GENOMIC DNA]</scope>
</reference>
<reference key="2">
    <citation type="journal article" date="1990" name="Virology">
        <title>Appendix to 'The complete DNA sequence of vaccinia virus'.</title>
        <authorList>
            <person name="Goebel S.J."/>
            <person name="Johnson G.P."/>
            <person name="Perkus M.E."/>
            <person name="Davis S.W."/>
            <person name="Winslow J.P."/>
            <person name="Paoletti E."/>
        </authorList>
    </citation>
    <scope>NUCLEOTIDE SEQUENCE [LARGE SCALE GENOMIC DNA]</scope>
</reference>
<comment type="function">
    <text evidence="1">Regulatory subunit of the mRNA cap enzyme which stabilizes the catalytic subunit and enhances its methyltransferase activity through an allosteric mechanism. Heterodimeric mRNA capping enzyme catalyzes the linkage of a N7-methyl-guanosine moiety to the first transcribed nucleotide (cap 0 structure), whereas the methyltransferase OPG102 is responsible for a second methylation at the 2'-O position of the ribose (cap 1 structure). Also involved in early viral gene transcription termination and intermediate viral gene transcription initiation. Early gene transcription termination requires the termination factor VTF, the DNA-dependent ATPase NPH-I/OPG123 and the RAP94/OPG109 subunit of the viral RNA polymerase, as well as the presence of a specific termination motif. Binds, together with RAP94/OPG109, to the termination motif 5'-UUUUUNU-3' in the nascent early mRNA.</text>
</comment>
<comment type="subunit">
    <text evidence="1">Interacts with the catalytic subunit OPG113.</text>
</comment>
<comment type="subcellular location">
    <subcellularLocation>
        <location evidence="1">Virion</location>
    </subcellularLocation>
    <text evidence="1">All the enzymes and other proteins required to synthesize early mRNAs are packaged within the virion core along with the DNA genome.</text>
</comment>
<comment type="similarity">
    <text evidence="2">Belongs to the orthopoxvirus mRNA-capping enzyme regulatory subunit family.</text>
</comment>
<proteinExistence type="evidence at protein level"/>
<protein>
    <recommendedName>
        <fullName>mRNA-capping enzyme regulatory subunit OPG124</fullName>
    </recommendedName>
    <alternativeName>
        <fullName>Virus termination factor small subunit</fullName>
        <shortName>VTF small subunit</shortName>
    </alternativeName>
    <alternativeName>
        <fullName>mRNA-capping enzyme 33 kDa subunit</fullName>
    </alternativeName>
    <alternativeName>
        <fullName>mRNA-capping enzyme D12 subunit</fullName>
    </alternativeName>
    <alternativeName>
        <fullName>mRNA-capping enzyme small subunit</fullName>
    </alternativeName>
</protein>
<organismHost>
    <name type="scientific">Homo sapiens</name>
    <name type="common">Human</name>
    <dbReference type="NCBI Taxonomy" id="9606"/>
</organismHost>
<sequence>MDEIVKNIREGTHVLLPFYETLPELNLSLGKSPLPSLEYGANYFLQISRVNDLNRMPTDMLKLFTHDIMLPESDLDKVYEILKINSVKYYGRSTKADAVVADLSARNKLFKRERDAIKSNNHLTENNLYISDYKMLTFDVFRPLFDFVNEKYCIIKLPTLFGRGVIDTMRIYCSLFKNVRLLKCVSDSWLKDSAIMVASDVCKKNLDLFMSHVKSVTKSSSWKDVNSVQFSILNDPVDTEFINKFLEFSNRVYEALYYVHSLLYSSMTSDSKSIENKHQRRLVKLLL</sequence>
<feature type="chain" id="PRO_0000210136" description="mRNA-capping enzyme regulatory subunit OPG124">
    <location>
        <begin position="1"/>
        <end position="287"/>
    </location>
</feature>
<name>MCES_VACCC</name>